<reference key="1">
    <citation type="journal article" date="2009" name="PLoS ONE">
        <title>Genome sequence of the endosymbiont Rickettsia peacockii and comparison with virulent Rickettsia rickettsii: identification of virulence factors.</title>
        <authorList>
            <person name="Felsheim R.F."/>
            <person name="Kurtti T.J."/>
            <person name="Munderloh U.G."/>
        </authorList>
    </citation>
    <scope>NUCLEOTIDE SEQUENCE [LARGE SCALE GENOMIC DNA]</scope>
    <source>
        <strain>Rustic</strain>
    </source>
</reference>
<dbReference type="EMBL" id="CP001227">
    <property type="protein sequence ID" value="ACR47764.1"/>
    <property type="molecule type" value="Genomic_DNA"/>
</dbReference>
<dbReference type="RefSeq" id="WP_012736942.1">
    <property type="nucleotide sequence ID" value="NC_012730.1"/>
</dbReference>
<dbReference type="SMR" id="C4K2G7"/>
<dbReference type="KEGG" id="rpk:RPR_06170"/>
<dbReference type="HOGENOM" id="CLU_061015_2_1_5"/>
<dbReference type="Proteomes" id="UP000005015">
    <property type="component" value="Chromosome"/>
</dbReference>
<dbReference type="GO" id="GO:1990904">
    <property type="term" value="C:ribonucleoprotein complex"/>
    <property type="evidence" value="ECO:0007669"/>
    <property type="project" value="UniProtKB-KW"/>
</dbReference>
<dbReference type="GO" id="GO:0005840">
    <property type="term" value="C:ribosome"/>
    <property type="evidence" value="ECO:0007669"/>
    <property type="project" value="UniProtKB-KW"/>
</dbReference>
<dbReference type="GO" id="GO:0019843">
    <property type="term" value="F:rRNA binding"/>
    <property type="evidence" value="ECO:0007669"/>
    <property type="project" value="UniProtKB-UniRule"/>
</dbReference>
<dbReference type="GO" id="GO:0003735">
    <property type="term" value="F:structural constituent of ribosome"/>
    <property type="evidence" value="ECO:0007669"/>
    <property type="project" value="InterPro"/>
</dbReference>
<dbReference type="GO" id="GO:0000049">
    <property type="term" value="F:tRNA binding"/>
    <property type="evidence" value="ECO:0007669"/>
    <property type="project" value="UniProtKB-UniRule"/>
</dbReference>
<dbReference type="GO" id="GO:0006412">
    <property type="term" value="P:translation"/>
    <property type="evidence" value="ECO:0007669"/>
    <property type="project" value="UniProtKB-UniRule"/>
</dbReference>
<dbReference type="FunFam" id="3.30.1440.10:FF:000001">
    <property type="entry name" value="50S ribosomal protein L5"/>
    <property type="match status" value="1"/>
</dbReference>
<dbReference type="Gene3D" id="3.30.1440.10">
    <property type="match status" value="1"/>
</dbReference>
<dbReference type="HAMAP" id="MF_01333_B">
    <property type="entry name" value="Ribosomal_uL5_B"/>
    <property type="match status" value="1"/>
</dbReference>
<dbReference type="InterPro" id="IPR002132">
    <property type="entry name" value="Ribosomal_uL5"/>
</dbReference>
<dbReference type="InterPro" id="IPR020930">
    <property type="entry name" value="Ribosomal_uL5_bac-type"/>
</dbReference>
<dbReference type="InterPro" id="IPR031309">
    <property type="entry name" value="Ribosomal_uL5_C"/>
</dbReference>
<dbReference type="InterPro" id="IPR020929">
    <property type="entry name" value="Ribosomal_uL5_CS"/>
</dbReference>
<dbReference type="InterPro" id="IPR022803">
    <property type="entry name" value="Ribosomal_uL5_dom_sf"/>
</dbReference>
<dbReference type="InterPro" id="IPR031310">
    <property type="entry name" value="Ribosomal_uL5_N"/>
</dbReference>
<dbReference type="NCBIfam" id="NF000585">
    <property type="entry name" value="PRK00010.1"/>
    <property type="match status" value="1"/>
</dbReference>
<dbReference type="PANTHER" id="PTHR11994">
    <property type="entry name" value="60S RIBOSOMAL PROTEIN L11-RELATED"/>
    <property type="match status" value="1"/>
</dbReference>
<dbReference type="Pfam" id="PF00281">
    <property type="entry name" value="Ribosomal_L5"/>
    <property type="match status" value="1"/>
</dbReference>
<dbReference type="Pfam" id="PF00673">
    <property type="entry name" value="Ribosomal_L5_C"/>
    <property type="match status" value="1"/>
</dbReference>
<dbReference type="PIRSF" id="PIRSF002161">
    <property type="entry name" value="Ribosomal_L5"/>
    <property type="match status" value="1"/>
</dbReference>
<dbReference type="SUPFAM" id="SSF55282">
    <property type="entry name" value="RL5-like"/>
    <property type="match status" value="1"/>
</dbReference>
<dbReference type="PROSITE" id="PS00358">
    <property type="entry name" value="RIBOSOMAL_L5"/>
    <property type="match status" value="1"/>
</dbReference>
<evidence type="ECO:0000255" key="1">
    <source>
        <dbReference type="HAMAP-Rule" id="MF_01333"/>
    </source>
</evidence>
<evidence type="ECO:0000305" key="2"/>
<sequence>MLRFKELYQQKIIENLQKNFSYKNKHEIPQIKKIVINMGVGEATADSKVINNAVNDLTLISGQKPVVTLARKSIATFKLRENMKIGCKVTLRKDRMYDFLERLVIVALPRVKEFRGFSYKSFDGKGNFTFGLKEQIVFPEINYDKIDTIRGMDITIVTSAKTDQESKFLLSGFNLPFYN</sequence>
<gene>
    <name evidence="1" type="primary">rplE</name>
    <name type="ordered locus">RPR_06170</name>
</gene>
<feature type="chain" id="PRO_1000214641" description="Large ribosomal subunit protein uL5">
    <location>
        <begin position="1"/>
        <end position="179"/>
    </location>
</feature>
<comment type="function">
    <text evidence="1">This is one of the proteins that bind and probably mediate the attachment of the 5S RNA into the large ribosomal subunit, where it forms part of the central protuberance. In the 70S ribosome it contacts protein S13 of the 30S subunit (bridge B1b), connecting the 2 subunits; this bridge is implicated in subunit movement. Contacts the P site tRNA; the 5S rRNA and some of its associated proteins might help stabilize positioning of ribosome-bound tRNAs.</text>
</comment>
<comment type="subunit">
    <text evidence="1">Part of the 50S ribosomal subunit; part of the 5S rRNA/L5/L18/L25 subcomplex. Contacts the 5S rRNA and the P site tRNA. Forms a bridge to the 30S subunit in the 70S ribosome.</text>
</comment>
<comment type="similarity">
    <text evidence="1">Belongs to the universal ribosomal protein uL5 family.</text>
</comment>
<keyword id="KW-0687">Ribonucleoprotein</keyword>
<keyword id="KW-0689">Ribosomal protein</keyword>
<keyword id="KW-0694">RNA-binding</keyword>
<keyword id="KW-0699">rRNA-binding</keyword>
<keyword id="KW-0820">tRNA-binding</keyword>
<accession>C4K2G7</accession>
<name>RL5_RICPU</name>
<organism>
    <name type="scientific">Rickettsia peacockii (strain Rustic)</name>
    <dbReference type="NCBI Taxonomy" id="562019"/>
    <lineage>
        <taxon>Bacteria</taxon>
        <taxon>Pseudomonadati</taxon>
        <taxon>Pseudomonadota</taxon>
        <taxon>Alphaproteobacteria</taxon>
        <taxon>Rickettsiales</taxon>
        <taxon>Rickettsiaceae</taxon>
        <taxon>Rickettsieae</taxon>
        <taxon>Rickettsia</taxon>
        <taxon>spotted fever group</taxon>
    </lineage>
</organism>
<protein>
    <recommendedName>
        <fullName evidence="1">Large ribosomal subunit protein uL5</fullName>
    </recommendedName>
    <alternativeName>
        <fullName evidence="2">50S ribosomal protein L5</fullName>
    </alternativeName>
</protein>
<proteinExistence type="inferred from homology"/>